<keyword id="KW-0030">Aminoacyl-tRNA synthetase</keyword>
<keyword id="KW-0067">ATP-binding</keyword>
<keyword id="KW-0963">Cytoplasm</keyword>
<keyword id="KW-0436">Ligase</keyword>
<keyword id="KW-0547">Nucleotide-binding</keyword>
<keyword id="KW-0648">Protein biosynthesis</keyword>
<keyword id="KW-1185">Reference proteome</keyword>
<gene>
    <name evidence="1" type="primary">serS</name>
    <name type="ordered locus">Noc_1036</name>
</gene>
<feature type="chain" id="PRO_1000019750" description="Serine--tRNA ligase">
    <location>
        <begin position="1"/>
        <end position="427"/>
    </location>
</feature>
<feature type="binding site" evidence="1">
    <location>
        <begin position="229"/>
        <end position="231"/>
    </location>
    <ligand>
        <name>L-serine</name>
        <dbReference type="ChEBI" id="CHEBI:33384"/>
    </ligand>
</feature>
<feature type="binding site" evidence="1">
    <location>
        <begin position="260"/>
        <end position="262"/>
    </location>
    <ligand>
        <name>ATP</name>
        <dbReference type="ChEBI" id="CHEBI:30616"/>
    </ligand>
</feature>
<feature type="binding site" evidence="1">
    <location>
        <position position="283"/>
    </location>
    <ligand>
        <name>L-serine</name>
        <dbReference type="ChEBI" id="CHEBI:33384"/>
    </ligand>
</feature>
<feature type="binding site" evidence="1">
    <location>
        <begin position="347"/>
        <end position="350"/>
    </location>
    <ligand>
        <name>ATP</name>
        <dbReference type="ChEBI" id="CHEBI:30616"/>
    </ligand>
</feature>
<feature type="binding site" evidence="1">
    <location>
        <position position="383"/>
    </location>
    <ligand>
        <name>L-serine</name>
        <dbReference type="ChEBI" id="CHEBI:33384"/>
    </ligand>
</feature>
<comment type="function">
    <text evidence="1">Catalyzes the attachment of serine to tRNA(Ser). Is also able to aminoacylate tRNA(Sec) with serine, to form the misacylated tRNA L-seryl-tRNA(Sec), which will be further converted into selenocysteinyl-tRNA(Sec).</text>
</comment>
<comment type="catalytic activity">
    <reaction evidence="1">
        <text>tRNA(Ser) + L-serine + ATP = L-seryl-tRNA(Ser) + AMP + diphosphate + H(+)</text>
        <dbReference type="Rhea" id="RHEA:12292"/>
        <dbReference type="Rhea" id="RHEA-COMP:9669"/>
        <dbReference type="Rhea" id="RHEA-COMP:9703"/>
        <dbReference type="ChEBI" id="CHEBI:15378"/>
        <dbReference type="ChEBI" id="CHEBI:30616"/>
        <dbReference type="ChEBI" id="CHEBI:33019"/>
        <dbReference type="ChEBI" id="CHEBI:33384"/>
        <dbReference type="ChEBI" id="CHEBI:78442"/>
        <dbReference type="ChEBI" id="CHEBI:78533"/>
        <dbReference type="ChEBI" id="CHEBI:456215"/>
        <dbReference type="EC" id="6.1.1.11"/>
    </reaction>
</comment>
<comment type="catalytic activity">
    <reaction evidence="1">
        <text>tRNA(Sec) + L-serine + ATP = L-seryl-tRNA(Sec) + AMP + diphosphate + H(+)</text>
        <dbReference type="Rhea" id="RHEA:42580"/>
        <dbReference type="Rhea" id="RHEA-COMP:9742"/>
        <dbReference type="Rhea" id="RHEA-COMP:10128"/>
        <dbReference type="ChEBI" id="CHEBI:15378"/>
        <dbReference type="ChEBI" id="CHEBI:30616"/>
        <dbReference type="ChEBI" id="CHEBI:33019"/>
        <dbReference type="ChEBI" id="CHEBI:33384"/>
        <dbReference type="ChEBI" id="CHEBI:78442"/>
        <dbReference type="ChEBI" id="CHEBI:78533"/>
        <dbReference type="ChEBI" id="CHEBI:456215"/>
        <dbReference type="EC" id="6.1.1.11"/>
    </reaction>
</comment>
<comment type="pathway">
    <text evidence="1">Aminoacyl-tRNA biosynthesis; selenocysteinyl-tRNA(Sec) biosynthesis; L-seryl-tRNA(Sec) from L-serine and tRNA(Sec): step 1/1.</text>
</comment>
<comment type="subunit">
    <text evidence="1">Homodimer. The tRNA molecule binds across the dimer.</text>
</comment>
<comment type="subcellular location">
    <subcellularLocation>
        <location evidence="1">Cytoplasm</location>
    </subcellularLocation>
</comment>
<comment type="domain">
    <text evidence="1">Consists of two distinct domains, a catalytic core and a N-terminal extension that is involved in tRNA binding.</text>
</comment>
<comment type="similarity">
    <text evidence="1">Belongs to the class-II aminoacyl-tRNA synthetase family. Type-1 seryl-tRNA synthetase subfamily.</text>
</comment>
<accession>Q3JCA2</accession>
<proteinExistence type="inferred from homology"/>
<reference key="1">
    <citation type="journal article" date="2006" name="Appl. Environ. Microbiol.">
        <title>Complete genome sequence of the marine, chemolithoautotrophic, ammonia-oxidizing bacterium Nitrosococcus oceani ATCC 19707.</title>
        <authorList>
            <person name="Klotz M.G."/>
            <person name="Arp D.J."/>
            <person name="Chain P.S.G."/>
            <person name="El-Sheikh A.F."/>
            <person name="Hauser L.J."/>
            <person name="Hommes N.G."/>
            <person name="Larimer F.W."/>
            <person name="Malfatti S.A."/>
            <person name="Norton J.M."/>
            <person name="Poret-Peterson A.T."/>
            <person name="Vergez L.M."/>
            <person name="Ward B.B."/>
        </authorList>
    </citation>
    <scope>NUCLEOTIDE SEQUENCE [LARGE SCALE GENOMIC DNA]</scope>
    <source>
        <strain>ATCC 19707 / BCRC 17464 / JCM 30415 / NCIMB 11848 / C-107</strain>
    </source>
</reference>
<organism>
    <name type="scientific">Nitrosococcus oceani (strain ATCC 19707 / BCRC 17464 / JCM 30415 / NCIMB 11848 / C-107)</name>
    <dbReference type="NCBI Taxonomy" id="323261"/>
    <lineage>
        <taxon>Bacteria</taxon>
        <taxon>Pseudomonadati</taxon>
        <taxon>Pseudomonadota</taxon>
        <taxon>Gammaproteobacteria</taxon>
        <taxon>Chromatiales</taxon>
        <taxon>Chromatiaceae</taxon>
        <taxon>Nitrosococcus</taxon>
    </lineage>
</organism>
<name>SYS_NITOC</name>
<evidence type="ECO:0000255" key="1">
    <source>
        <dbReference type="HAMAP-Rule" id="MF_00176"/>
    </source>
</evidence>
<protein>
    <recommendedName>
        <fullName evidence="1">Serine--tRNA ligase</fullName>
        <ecNumber evidence="1">6.1.1.11</ecNumber>
    </recommendedName>
    <alternativeName>
        <fullName evidence="1">Seryl-tRNA synthetase</fullName>
        <shortName evidence="1">SerRS</shortName>
    </alternativeName>
    <alternativeName>
        <fullName evidence="1">Seryl-tRNA(Ser/Sec) synthetase</fullName>
    </alternativeName>
</protein>
<sequence>MLDPKLLRNALADTTRQLARRGFEWDAAAFATLEAERKEMQVCTQELQAKRNARSKIIGKAKAQGEDIAPLLAEMTELGDHLKTVEARLEVVQAQIEEILLGIPNLPDASTPPGKDEQDNVEVRRWGTPPALEFVPKDHVDLGASLGMDFETAVKLSGTRFVTLIGPLAQLHRALIQFMLDVHTREHGYTEVYVPYLANRESLVGTGQLPKFEEGLFAIRDTGYYLIPTAEVPVTNLVRGEILLAERLPLKYVAHTPCFRSEAGSYGKDTRGMIRQHQFEKVELVQIVPPEVSQQAHEDLTGHAEAILQRLGLPYRVMNLCAGDLGFASSKTYDLEVWLPGQQTYREISSCSNFLDFQARRIQARWRDPKTQKPAWVHTLNGSGLAVGRTLLALMENYQQADGSIRIPETLQPYMGGVSVLQPSIRG</sequence>
<dbReference type="EC" id="6.1.1.11" evidence="1"/>
<dbReference type="EMBL" id="CP000127">
    <property type="protein sequence ID" value="ABA57544.1"/>
    <property type="molecule type" value="Genomic_DNA"/>
</dbReference>
<dbReference type="RefSeq" id="WP_002808999.1">
    <property type="nucleotide sequence ID" value="NC_007484.1"/>
</dbReference>
<dbReference type="SMR" id="Q3JCA2"/>
<dbReference type="FunCoup" id="Q3JCA2">
    <property type="interactions" value="555"/>
</dbReference>
<dbReference type="STRING" id="323261.Noc_1036"/>
<dbReference type="KEGG" id="noc:Noc_1036"/>
<dbReference type="eggNOG" id="COG0172">
    <property type="taxonomic scope" value="Bacteria"/>
</dbReference>
<dbReference type="HOGENOM" id="CLU_023797_0_1_6"/>
<dbReference type="InParanoid" id="Q3JCA2"/>
<dbReference type="UniPathway" id="UPA00906">
    <property type="reaction ID" value="UER00895"/>
</dbReference>
<dbReference type="Proteomes" id="UP000006838">
    <property type="component" value="Chromosome"/>
</dbReference>
<dbReference type="GO" id="GO:0005737">
    <property type="term" value="C:cytoplasm"/>
    <property type="evidence" value="ECO:0007669"/>
    <property type="project" value="UniProtKB-SubCell"/>
</dbReference>
<dbReference type="GO" id="GO:0005524">
    <property type="term" value="F:ATP binding"/>
    <property type="evidence" value="ECO:0007669"/>
    <property type="project" value="UniProtKB-UniRule"/>
</dbReference>
<dbReference type="GO" id="GO:0004828">
    <property type="term" value="F:serine-tRNA ligase activity"/>
    <property type="evidence" value="ECO:0007669"/>
    <property type="project" value="UniProtKB-UniRule"/>
</dbReference>
<dbReference type="GO" id="GO:0016260">
    <property type="term" value="P:selenocysteine biosynthetic process"/>
    <property type="evidence" value="ECO:0007669"/>
    <property type="project" value="UniProtKB-UniRule"/>
</dbReference>
<dbReference type="GO" id="GO:0006434">
    <property type="term" value="P:seryl-tRNA aminoacylation"/>
    <property type="evidence" value="ECO:0007669"/>
    <property type="project" value="UniProtKB-UniRule"/>
</dbReference>
<dbReference type="CDD" id="cd00770">
    <property type="entry name" value="SerRS_core"/>
    <property type="match status" value="1"/>
</dbReference>
<dbReference type="Gene3D" id="3.30.930.10">
    <property type="entry name" value="Bira Bifunctional Protein, Domain 2"/>
    <property type="match status" value="1"/>
</dbReference>
<dbReference type="Gene3D" id="1.10.287.40">
    <property type="entry name" value="Serine-tRNA synthetase, tRNA binding domain"/>
    <property type="match status" value="1"/>
</dbReference>
<dbReference type="HAMAP" id="MF_00176">
    <property type="entry name" value="Ser_tRNA_synth_type1"/>
    <property type="match status" value="1"/>
</dbReference>
<dbReference type="InterPro" id="IPR002314">
    <property type="entry name" value="aa-tRNA-synt_IIb"/>
</dbReference>
<dbReference type="InterPro" id="IPR006195">
    <property type="entry name" value="aa-tRNA-synth_II"/>
</dbReference>
<dbReference type="InterPro" id="IPR045864">
    <property type="entry name" value="aa-tRNA-synth_II/BPL/LPL"/>
</dbReference>
<dbReference type="InterPro" id="IPR002317">
    <property type="entry name" value="Ser-tRNA-ligase_type_1"/>
</dbReference>
<dbReference type="InterPro" id="IPR015866">
    <property type="entry name" value="Ser-tRNA-synth_1_N"/>
</dbReference>
<dbReference type="InterPro" id="IPR042103">
    <property type="entry name" value="SerRS_1_N_sf"/>
</dbReference>
<dbReference type="InterPro" id="IPR033729">
    <property type="entry name" value="SerRS_core"/>
</dbReference>
<dbReference type="InterPro" id="IPR010978">
    <property type="entry name" value="tRNA-bd_arm"/>
</dbReference>
<dbReference type="NCBIfam" id="TIGR00414">
    <property type="entry name" value="serS"/>
    <property type="match status" value="1"/>
</dbReference>
<dbReference type="PANTHER" id="PTHR43697:SF1">
    <property type="entry name" value="SERINE--TRNA LIGASE"/>
    <property type="match status" value="1"/>
</dbReference>
<dbReference type="PANTHER" id="PTHR43697">
    <property type="entry name" value="SERYL-TRNA SYNTHETASE"/>
    <property type="match status" value="1"/>
</dbReference>
<dbReference type="Pfam" id="PF02403">
    <property type="entry name" value="Seryl_tRNA_N"/>
    <property type="match status" value="1"/>
</dbReference>
<dbReference type="Pfam" id="PF00587">
    <property type="entry name" value="tRNA-synt_2b"/>
    <property type="match status" value="1"/>
</dbReference>
<dbReference type="PIRSF" id="PIRSF001529">
    <property type="entry name" value="Ser-tRNA-synth_IIa"/>
    <property type="match status" value="1"/>
</dbReference>
<dbReference type="PRINTS" id="PR00981">
    <property type="entry name" value="TRNASYNTHSER"/>
</dbReference>
<dbReference type="SUPFAM" id="SSF55681">
    <property type="entry name" value="Class II aaRS and biotin synthetases"/>
    <property type="match status" value="1"/>
</dbReference>
<dbReference type="SUPFAM" id="SSF46589">
    <property type="entry name" value="tRNA-binding arm"/>
    <property type="match status" value="1"/>
</dbReference>
<dbReference type="PROSITE" id="PS50862">
    <property type="entry name" value="AA_TRNA_LIGASE_II"/>
    <property type="match status" value="1"/>
</dbReference>